<gene>
    <name type="ordered locus">MIMI_L15</name>
</gene>
<proteinExistence type="inferred from homology"/>
<dbReference type="EMBL" id="AY653733">
    <property type="protein sequence ID" value="AAV50290.1"/>
    <property type="molecule type" value="Genomic_DNA"/>
</dbReference>
<dbReference type="KEGG" id="vg:9924591"/>
<dbReference type="OrthoDB" id="31705at10239"/>
<dbReference type="Proteomes" id="UP000001134">
    <property type="component" value="Genome"/>
</dbReference>
<keyword id="KW-1185">Reference proteome</keyword>
<accession>Q5UP95</accession>
<reference key="1">
    <citation type="journal article" date="2004" name="Science">
        <title>The 1.2-megabase genome sequence of Mimivirus.</title>
        <authorList>
            <person name="Raoult D."/>
            <person name="Audic S."/>
            <person name="Robert C."/>
            <person name="Abergel C."/>
            <person name="Renesto P."/>
            <person name="Ogata H."/>
            <person name="La Scola B."/>
            <person name="Susan M."/>
            <person name="Claverie J.-M."/>
        </authorList>
    </citation>
    <scope>NUCLEOTIDE SEQUENCE [LARGE SCALE GENOMIC DNA]</scope>
    <source>
        <strain>Rowbotham-Bradford</strain>
    </source>
</reference>
<feature type="chain" id="PRO_0000071178" description="Uncharacterized protein L15">
    <location>
        <begin position="1"/>
        <end position="116"/>
    </location>
</feature>
<name>YL015_MIMIV</name>
<sequence length="116" mass="13667">MSVSFPLSKNLHYRPEGNKLNITIGDLKVGSVEFVRETGCLKSECYYPLKWHEELNSWYRCCDNNCEEDHPVPEGVPFPTRINNNIQTLEWFEEKDTDLTQAITRIWNTYQLLQLN</sequence>
<organism>
    <name type="scientific">Acanthamoeba polyphaga mimivirus</name>
    <name type="common">APMV</name>
    <dbReference type="NCBI Taxonomy" id="212035"/>
    <lineage>
        <taxon>Viruses</taxon>
        <taxon>Varidnaviria</taxon>
        <taxon>Bamfordvirae</taxon>
        <taxon>Nucleocytoviricota</taxon>
        <taxon>Megaviricetes</taxon>
        <taxon>Imitervirales</taxon>
        <taxon>Mimiviridae</taxon>
        <taxon>Megamimivirinae</taxon>
        <taxon>Mimivirus</taxon>
        <taxon>Mimivirus bradfordmassiliense</taxon>
    </lineage>
</organism>
<comment type="similarity">
    <text evidence="1">Belongs to the mimivirus L15/L51/R83 family.</text>
</comment>
<protein>
    <recommendedName>
        <fullName>Uncharacterized protein L15</fullName>
    </recommendedName>
</protein>
<organismHost>
    <name type="scientific">Acanthamoeba polyphaga</name>
    <name type="common">Amoeba</name>
    <dbReference type="NCBI Taxonomy" id="5757"/>
</organismHost>
<evidence type="ECO:0000305" key="1"/>